<keyword id="KW-0067">ATP-binding</keyword>
<keyword id="KW-0436">Ligase</keyword>
<keyword id="KW-0496">Mitochondrion</keyword>
<keyword id="KW-0547">Nucleotide-binding</keyword>
<keyword id="KW-0648">Protein biosynthesis</keyword>
<keyword id="KW-1185">Reference proteome</keyword>
<keyword id="KW-0809">Transit peptide</keyword>
<sequence>MFRSCLRHCRRATVRSRTCPRCSHHEIPQLQVVQRQISLSSSFPHIRRLQTSSTDTQERIPIRKQLKQEAKAIKSRKRERREQEEASRHKWELTVGVEIHAQLNTETKLFSRAPTSPSELPNTNVALFDLAFPGSQPEFQVATLLPALRAAIALNCDIQPVSRFDRKHYFYQDQPSGYQITQYYEPFARNGYLDLFRHDGIAPEDGDRVRIGIKQIQLEQDTAKSQEYPPSMQLLDFNRVSHPLIEIITMPEIHTPATAAAFVRKVQAILQSCSAVTTGMEAGGLRADINVSVRLRGDGSGTHQYSGIGGLGQRTEIKNLSSFKAVEDAIIAEKNRQIAVLESGGVVEGETRGWTIGSTETRKLRGKEGEVDYRYMPDPDIPPLLIGKDIISALSNTLPAGPDALIDMLVGQYGLAIEDAKPLVELEDGARLEYYQDVVDILRNLQQDLDSKTQAGLGRVAGNWVLHELGGLLSKAGLAWDAERVTAESLAALIDQLQRKRITGATAKKVLAMLFDGDRRPVAQLLEEENLILRPLSREEYIALASAAIELNPQMVEQIRSKNQLGKLGWFVGQMMRMGEKGRVEAQKADAILRELILGLSQ</sequence>
<evidence type="ECO:0000255" key="1">
    <source>
        <dbReference type="HAMAP-Rule" id="MF_03147"/>
    </source>
</evidence>
<evidence type="ECO:0000305" key="2"/>
<reference key="1">
    <citation type="submission" date="1996-07" db="EMBL/GenBank/DDBJ databases">
        <title>Cloning and analysis of the yeast pet112 homolog from the Emericella nidulans.</title>
        <authorList>
            <person name="Swigut T."/>
        </authorList>
    </citation>
    <scope>NUCLEOTIDE SEQUENCE [GENOMIC DNA]</scope>
</reference>
<reference key="2">
    <citation type="journal article" date="2005" name="Nature">
        <title>Sequencing of Aspergillus nidulans and comparative analysis with A. fumigatus and A. oryzae.</title>
        <authorList>
            <person name="Galagan J.E."/>
            <person name="Calvo S.E."/>
            <person name="Cuomo C."/>
            <person name="Ma L.-J."/>
            <person name="Wortman J.R."/>
            <person name="Batzoglou S."/>
            <person name="Lee S.-I."/>
            <person name="Bastuerkmen M."/>
            <person name="Spevak C.C."/>
            <person name="Clutterbuck J."/>
            <person name="Kapitonov V."/>
            <person name="Jurka J."/>
            <person name="Scazzocchio C."/>
            <person name="Farman M.L."/>
            <person name="Butler J."/>
            <person name="Purcell S."/>
            <person name="Harris S."/>
            <person name="Braus G.H."/>
            <person name="Draht O."/>
            <person name="Busch S."/>
            <person name="D'Enfert C."/>
            <person name="Bouchier C."/>
            <person name="Goldman G.H."/>
            <person name="Bell-Pedersen D."/>
            <person name="Griffiths-Jones S."/>
            <person name="Doonan J.H."/>
            <person name="Yu J."/>
            <person name="Vienken K."/>
            <person name="Pain A."/>
            <person name="Freitag M."/>
            <person name="Selker E.U."/>
            <person name="Archer D.B."/>
            <person name="Penalva M.A."/>
            <person name="Oakley B.R."/>
            <person name="Momany M."/>
            <person name="Tanaka T."/>
            <person name="Kumagai T."/>
            <person name="Asai K."/>
            <person name="Machida M."/>
            <person name="Nierman W.C."/>
            <person name="Denning D.W."/>
            <person name="Caddick M.X."/>
            <person name="Hynes M."/>
            <person name="Paoletti M."/>
            <person name="Fischer R."/>
            <person name="Miller B.L."/>
            <person name="Dyer P.S."/>
            <person name="Sachs M.S."/>
            <person name="Osmani S.A."/>
            <person name="Birren B.W."/>
        </authorList>
    </citation>
    <scope>NUCLEOTIDE SEQUENCE [LARGE SCALE GENOMIC DNA]</scope>
    <source>
        <strain>FGSC A4 / ATCC 38163 / CBS 112.46 / NRRL 194 / M139</strain>
    </source>
</reference>
<reference key="3">
    <citation type="journal article" date="2009" name="Fungal Genet. Biol.">
        <title>The 2008 update of the Aspergillus nidulans genome annotation: a community effort.</title>
        <authorList>
            <person name="Wortman J.R."/>
            <person name="Gilsenan J.M."/>
            <person name="Joardar V."/>
            <person name="Deegan J."/>
            <person name="Clutterbuck J."/>
            <person name="Andersen M.R."/>
            <person name="Archer D."/>
            <person name="Bencina M."/>
            <person name="Braus G."/>
            <person name="Coutinho P."/>
            <person name="von Dohren H."/>
            <person name="Doonan J."/>
            <person name="Driessen A.J."/>
            <person name="Durek P."/>
            <person name="Espeso E."/>
            <person name="Fekete E."/>
            <person name="Flipphi M."/>
            <person name="Estrada C.G."/>
            <person name="Geysens S."/>
            <person name="Goldman G."/>
            <person name="de Groot P.W."/>
            <person name="Hansen K."/>
            <person name="Harris S.D."/>
            <person name="Heinekamp T."/>
            <person name="Helmstaedt K."/>
            <person name="Henrissat B."/>
            <person name="Hofmann G."/>
            <person name="Homan T."/>
            <person name="Horio T."/>
            <person name="Horiuchi H."/>
            <person name="James S."/>
            <person name="Jones M."/>
            <person name="Karaffa L."/>
            <person name="Karanyi Z."/>
            <person name="Kato M."/>
            <person name="Keller N."/>
            <person name="Kelly D.E."/>
            <person name="Kiel J.A."/>
            <person name="Kim J.M."/>
            <person name="van der Klei I.J."/>
            <person name="Klis F.M."/>
            <person name="Kovalchuk A."/>
            <person name="Krasevec N."/>
            <person name="Kubicek C.P."/>
            <person name="Liu B."/>
            <person name="Maccabe A."/>
            <person name="Meyer V."/>
            <person name="Mirabito P."/>
            <person name="Miskei M."/>
            <person name="Mos M."/>
            <person name="Mullins J."/>
            <person name="Nelson D.R."/>
            <person name="Nielsen J."/>
            <person name="Oakley B.R."/>
            <person name="Osmani S.A."/>
            <person name="Pakula T."/>
            <person name="Paszewski A."/>
            <person name="Paulsen I."/>
            <person name="Pilsyk S."/>
            <person name="Pocsi I."/>
            <person name="Punt P.J."/>
            <person name="Ram A.F."/>
            <person name="Ren Q."/>
            <person name="Robellet X."/>
            <person name="Robson G."/>
            <person name="Seiboth B."/>
            <person name="van Solingen P."/>
            <person name="Specht T."/>
            <person name="Sun J."/>
            <person name="Taheri-Talesh N."/>
            <person name="Takeshita N."/>
            <person name="Ussery D."/>
            <person name="vanKuyk P.A."/>
            <person name="Visser H."/>
            <person name="van de Vondervoort P.J."/>
            <person name="de Vries R.P."/>
            <person name="Walton J."/>
            <person name="Xiang X."/>
            <person name="Xiong Y."/>
            <person name="Zeng A.P."/>
            <person name="Brandt B.W."/>
            <person name="Cornell M.J."/>
            <person name="van den Hondel C.A."/>
            <person name="Visser J."/>
            <person name="Oliver S.G."/>
            <person name="Turner G."/>
        </authorList>
    </citation>
    <scope>GENOME REANNOTATION</scope>
    <source>
        <strain>FGSC A4 / ATCC 38163 / CBS 112.46 / NRRL 194 / M139</strain>
    </source>
</reference>
<protein>
    <recommendedName>
        <fullName evidence="1">Glutamyl-tRNA(Gln) amidotransferase subunit B, mitochondrial</fullName>
        <shortName evidence="1">Glu-AdT subunit B</shortName>
        <ecNumber evidence="1">6.3.5.-</ecNumber>
    </recommendedName>
    <alternativeName>
        <fullName>Protein NEMPA</fullName>
    </alternativeName>
</protein>
<gene>
    <name type="primary">nempA</name>
    <name type="ORF">AN2900</name>
</gene>
<comment type="function">
    <text evidence="1">Allows the formation of correctly charged Gln-tRNA(Gln) through the transamidation of misacylated Glu-tRNA(Gln) in the mitochondria. The reaction takes place in the presence of glutamine and ATP through an activated gamma-phospho-Glu-tRNA(Gln).</text>
</comment>
<comment type="catalytic activity">
    <reaction evidence="1">
        <text>L-glutamyl-tRNA(Gln) + L-glutamine + ATP + H2O = L-glutaminyl-tRNA(Gln) + L-glutamate + ADP + phosphate + H(+)</text>
        <dbReference type="Rhea" id="RHEA:17521"/>
        <dbReference type="Rhea" id="RHEA-COMP:9681"/>
        <dbReference type="Rhea" id="RHEA-COMP:9684"/>
        <dbReference type="ChEBI" id="CHEBI:15377"/>
        <dbReference type="ChEBI" id="CHEBI:15378"/>
        <dbReference type="ChEBI" id="CHEBI:29985"/>
        <dbReference type="ChEBI" id="CHEBI:30616"/>
        <dbReference type="ChEBI" id="CHEBI:43474"/>
        <dbReference type="ChEBI" id="CHEBI:58359"/>
        <dbReference type="ChEBI" id="CHEBI:78520"/>
        <dbReference type="ChEBI" id="CHEBI:78521"/>
        <dbReference type="ChEBI" id="CHEBI:456216"/>
    </reaction>
</comment>
<comment type="subunit">
    <text evidence="1">Subunit of the heterotrimeric GatCAB amidotransferase (AdT) complex, composed of A, B and C subunits.</text>
</comment>
<comment type="subcellular location">
    <subcellularLocation>
        <location evidence="2">Mitochondrion</location>
    </subcellularLocation>
</comment>
<comment type="similarity">
    <text evidence="1">Belongs to the GatB/GatE family. GatB subfamily.</text>
</comment>
<comment type="sequence caution" evidence="2">
    <conflict type="frameshift">
        <sequence resource="EMBL-CDS" id="AAB05037"/>
    </conflict>
</comment>
<name>GATB_EMENI</name>
<feature type="transit peptide" description="Mitochondrion" evidence="1">
    <location>
        <begin position="1"/>
        <end position="56"/>
    </location>
</feature>
<feature type="chain" id="PRO_0000010713" description="Glutamyl-tRNA(Gln) amidotransferase subunit B, mitochondrial">
    <location>
        <begin position="57"/>
        <end position="602"/>
    </location>
</feature>
<feature type="sequence conflict" description="In Ref. 1; AAB05037." evidence="2" ref="1">
    <original>V</original>
    <variation>L</variation>
    <location>
        <position position="291"/>
    </location>
</feature>
<feature type="sequence conflict" description="In Ref. 1; AAB05037." evidence="2" ref="1">
    <original>E</original>
    <variation>D</variation>
    <location>
        <position position="350"/>
    </location>
</feature>
<feature type="sequence conflict" description="In Ref. 1; AAB05037." evidence="2" ref="1">
    <original>E</original>
    <variation>Q</variation>
    <location>
        <position position="368"/>
    </location>
</feature>
<feature type="sequence conflict" description="In Ref. 1; AAB05037." evidence="2" ref="1">
    <original>E</original>
    <variation>D</variation>
    <location>
        <position position="370"/>
    </location>
</feature>
<feature type="sequence conflict" description="In Ref. 1; AAB05037." evidence="2" ref="1">
    <original>R</original>
    <variation>P</variation>
    <location>
        <position position="443"/>
    </location>
</feature>
<feature type="sequence conflict" description="In Ref. 1; AAB05037." evidence="2" ref="1">
    <original>R</original>
    <variation>S</variation>
    <location>
        <position position="459"/>
    </location>
</feature>
<feature type="sequence conflict" description="In Ref. 1; AAB05037." evidence="2" ref="1">
    <location>
        <position position="535"/>
    </location>
</feature>
<feature type="sequence conflict" description="In Ref. 1; AAB05037." evidence="2" ref="1">
    <original>A</original>
    <variation>R</variation>
    <location>
        <position position="589"/>
    </location>
</feature>
<proteinExistence type="inferred from homology"/>
<organism>
    <name type="scientific">Emericella nidulans (strain FGSC A4 / ATCC 38163 / CBS 112.46 / NRRL 194 / M139)</name>
    <name type="common">Aspergillus nidulans</name>
    <dbReference type="NCBI Taxonomy" id="227321"/>
    <lineage>
        <taxon>Eukaryota</taxon>
        <taxon>Fungi</taxon>
        <taxon>Dikarya</taxon>
        <taxon>Ascomycota</taxon>
        <taxon>Pezizomycotina</taxon>
        <taxon>Eurotiomycetes</taxon>
        <taxon>Eurotiomycetidae</taxon>
        <taxon>Eurotiales</taxon>
        <taxon>Aspergillaceae</taxon>
        <taxon>Aspergillus</taxon>
        <taxon>Aspergillus subgen. Nidulantes</taxon>
    </lineage>
</organism>
<accession>Q33446</accession>
<accession>C8VJ83</accession>
<accession>Q5B980</accession>
<dbReference type="EC" id="6.3.5.-" evidence="1"/>
<dbReference type="EMBL" id="U62332">
    <property type="protein sequence ID" value="AAB05037.1"/>
    <property type="status" value="ALT_FRAME"/>
    <property type="molecule type" value="Genomic_DNA"/>
</dbReference>
<dbReference type="EMBL" id="AACD01000051">
    <property type="protein sequence ID" value="EAA63471.1"/>
    <property type="molecule type" value="Genomic_DNA"/>
</dbReference>
<dbReference type="EMBL" id="BN001306">
    <property type="protein sequence ID" value="CBF83785.1"/>
    <property type="molecule type" value="Genomic_DNA"/>
</dbReference>
<dbReference type="RefSeq" id="XP_660504.1">
    <property type="nucleotide sequence ID" value="XM_655412.1"/>
</dbReference>
<dbReference type="SMR" id="Q33446"/>
<dbReference type="FunCoup" id="Q33446">
    <property type="interactions" value="350"/>
</dbReference>
<dbReference type="STRING" id="227321.Q33446"/>
<dbReference type="EnsemblFungi" id="CBF83785">
    <property type="protein sequence ID" value="CBF83785"/>
    <property type="gene ID" value="ANIA_02900"/>
</dbReference>
<dbReference type="KEGG" id="ani:ANIA_02900"/>
<dbReference type="VEuPathDB" id="FungiDB:AN2900"/>
<dbReference type="eggNOG" id="KOG2438">
    <property type="taxonomic scope" value="Eukaryota"/>
</dbReference>
<dbReference type="HOGENOM" id="CLU_019240_4_1_1"/>
<dbReference type="InParanoid" id="Q33446"/>
<dbReference type="OMA" id="ARKWWMG"/>
<dbReference type="OrthoDB" id="1722066at2759"/>
<dbReference type="Proteomes" id="UP000000560">
    <property type="component" value="Chromosome VI"/>
</dbReference>
<dbReference type="GO" id="GO:0030956">
    <property type="term" value="C:glutamyl-tRNA(Gln) amidotransferase complex"/>
    <property type="evidence" value="ECO:0000318"/>
    <property type="project" value="GO_Central"/>
</dbReference>
<dbReference type="GO" id="GO:0005739">
    <property type="term" value="C:mitochondrion"/>
    <property type="evidence" value="ECO:0000318"/>
    <property type="project" value="GO_Central"/>
</dbReference>
<dbReference type="GO" id="GO:0005524">
    <property type="term" value="F:ATP binding"/>
    <property type="evidence" value="ECO:0007669"/>
    <property type="project" value="UniProtKB-KW"/>
</dbReference>
<dbReference type="GO" id="GO:0050567">
    <property type="term" value="F:glutaminyl-tRNA synthase (glutamine-hydrolyzing) activity"/>
    <property type="evidence" value="ECO:0000318"/>
    <property type="project" value="GO_Central"/>
</dbReference>
<dbReference type="GO" id="GO:0070681">
    <property type="term" value="P:glutaminyl-tRNAGln biosynthesis via transamidation"/>
    <property type="evidence" value="ECO:0000318"/>
    <property type="project" value="GO_Central"/>
</dbReference>
<dbReference type="GO" id="GO:0032543">
    <property type="term" value="P:mitochondrial translation"/>
    <property type="evidence" value="ECO:0000318"/>
    <property type="project" value="GO_Central"/>
</dbReference>
<dbReference type="Gene3D" id="1.10.10.410">
    <property type="match status" value="1"/>
</dbReference>
<dbReference type="HAMAP" id="MF_00121">
    <property type="entry name" value="GatB"/>
    <property type="match status" value="1"/>
</dbReference>
<dbReference type="InterPro" id="IPR017959">
    <property type="entry name" value="Asn/Gln-tRNA_amidoTrfase_suB/E"/>
</dbReference>
<dbReference type="InterPro" id="IPR006075">
    <property type="entry name" value="Asn/Gln-tRNA_Trfase_suB/E_cat"/>
</dbReference>
<dbReference type="InterPro" id="IPR018027">
    <property type="entry name" value="Asn/Gln_amidotransferase"/>
</dbReference>
<dbReference type="InterPro" id="IPR003789">
    <property type="entry name" value="Asn/Gln_tRNA_amidoTrase-B-like"/>
</dbReference>
<dbReference type="InterPro" id="IPR004413">
    <property type="entry name" value="GatB"/>
</dbReference>
<dbReference type="InterPro" id="IPR023168">
    <property type="entry name" value="GatB_Yqey_C_2"/>
</dbReference>
<dbReference type="InterPro" id="IPR017958">
    <property type="entry name" value="Gln-tRNA_amidoTrfase_suB_CS"/>
</dbReference>
<dbReference type="InterPro" id="IPR014746">
    <property type="entry name" value="Gln_synth/guanido_kin_cat_dom"/>
</dbReference>
<dbReference type="NCBIfam" id="TIGR00133">
    <property type="entry name" value="gatB"/>
    <property type="match status" value="1"/>
</dbReference>
<dbReference type="NCBIfam" id="NF004012">
    <property type="entry name" value="PRK05477.1-2"/>
    <property type="match status" value="1"/>
</dbReference>
<dbReference type="PANTHER" id="PTHR11659">
    <property type="entry name" value="GLUTAMYL-TRNA GLN AMIDOTRANSFERASE SUBUNIT B MITOCHONDRIAL AND PROKARYOTIC PET112-RELATED"/>
    <property type="match status" value="1"/>
</dbReference>
<dbReference type="PANTHER" id="PTHR11659:SF0">
    <property type="entry name" value="GLUTAMYL-TRNA(GLN) AMIDOTRANSFERASE SUBUNIT B, MITOCHONDRIAL"/>
    <property type="match status" value="1"/>
</dbReference>
<dbReference type="Pfam" id="PF02934">
    <property type="entry name" value="GatB_N"/>
    <property type="match status" value="1"/>
</dbReference>
<dbReference type="Pfam" id="PF02637">
    <property type="entry name" value="GatB_Yqey"/>
    <property type="match status" value="1"/>
</dbReference>
<dbReference type="SMART" id="SM00845">
    <property type="entry name" value="GatB_Yqey"/>
    <property type="match status" value="1"/>
</dbReference>
<dbReference type="SUPFAM" id="SSF89095">
    <property type="entry name" value="GatB/YqeY motif"/>
    <property type="match status" value="1"/>
</dbReference>
<dbReference type="SUPFAM" id="SSF55931">
    <property type="entry name" value="Glutamine synthetase/guanido kinase"/>
    <property type="match status" value="1"/>
</dbReference>
<dbReference type="PROSITE" id="PS01234">
    <property type="entry name" value="GATB"/>
    <property type="match status" value="1"/>
</dbReference>